<comment type="function">
    <text evidence="1">Catalyzes the stereoinversion of LL-2,6-diaminopimelate (L,L-DAP) to meso-diaminopimelate (meso-DAP), a precursor of L-lysine and an essential component of the bacterial peptidoglycan.</text>
</comment>
<comment type="catalytic activity">
    <reaction evidence="1">
        <text>(2S,6S)-2,6-diaminopimelate = meso-2,6-diaminopimelate</text>
        <dbReference type="Rhea" id="RHEA:15393"/>
        <dbReference type="ChEBI" id="CHEBI:57609"/>
        <dbReference type="ChEBI" id="CHEBI:57791"/>
        <dbReference type="EC" id="5.1.1.7"/>
    </reaction>
</comment>
<comment type="pathway">
    <text evidence="1">Amino-acid biosynthesis; L-lysine biosynthesis via DAP pathway; DL-2,6-diaminopimelate from LL-2,6-diaminopimelate: step 1/1.</text>
</comment>
<comment type="subunit">
    <text evidence="1">Homodimer.</text>
</comment>
<comment type="subcellular location">
    <subcellularLocation>
        <location evidence="1">Cytoplasm</location>
    </subcellularLocation>
</comment>
<comment type="similarity">
    <text evidence="1">Belongs to the diaminopimelate epimerase family.</text>
</comment>
<protein>
    <recommendedName>
        <fullName evidence="1">Diaminopimelate epimerase</fullName>
        <shortName evidence="1">DAP epimerase</shortName>
        <ecNumber evidence="1">5.1.1.7</ecNumber>
    </recommendedName>
    <alternativeName>
        <fullName evidence="1">PLP-independent amino acid racemase</fullName>
    </alternativeName>
</protein>
<name>DAPF_HELPY</name>
<reference key="1">
    <citation type="journal article" date="1997" name="Nature">
        <title>The complete genome sequence of the gastric pathogen Helicobacter pylori.</title>
        <authorList>
            <person name="Tomb J.-F."/>
            <person name="White O."/>
            <person name="Kerlavage A.R."/>
            <person name="Clayton R.A."/>
            <person name="Sutton G.G."/>
            <person name="Fleischmann R.D."/>
            <person name="Ketchum K.A."/>
            <person name="Klenk H.-P."/>
            <person name="Gill S.R."/>
            <person name="Dougherty B.A."/>
            <person name="Nelson K.E."/>
            <person name="Quackenbush J."/>
            <person name="Zhou L."/>
            <person name="Kirkness E.F."/>
            <person name="Peterson S.N."/>
            <person name="Loftus B.J."/>
            <person name="Richardson D.L."/>
            <person name="Dodson R.J."/>
            <person name="Khalak H.G."/>
            <person name="Glodek A."/>
            <person name="McKenney K."/>
            <person name="FitzGerald L.M."/>
            <person name="Lee N."/>
            <person name="Adams M.D."/>
            <person name="Hickey E.K."/>
            <person name="Berg D.E."/>
            <person name="Gocayne J.D."/>
            <person name="Utterback T.R."/>
            <person name="Peterson J.D."/>
            <person name="Kelley J.M."/>
            <person name="Cotton M.D."/>
            <person name="Weidman J.F."/>
            <person name="Fujii C."/>
            <person name="Bowman C."/>
            <person name="Watthey L."/>
            <person name="Wallin E."/>
            <person name="Hayes W.S."/>
            <person name="Borodovsky M."/>
            <person name="Karp P.D."/>
            <person name="Smith H.O."/>
            <person name="Fraser C.M."/>
            <person name="Venter J.C."/>
        </authorList>
    </citation>
    <scope>NUCLEOTIDE SEQUENCE [LARGE SCALE GENOMIC DNA]</scope>
    <source>
        <strain>ATCC 700392 / 26695</strain>
    </source>
</reference>
<keyword id="KW-0028">Amino-acid biosynthesis</keyword>
<keyword id="KW-0963">Cytoplasm</keyword>
<keyword id="KW-0413">Isomerase</keyword>
<keyword id="KW-0457">Lysine biosynthesis</keyword>
<keyword id="KW-1185">Reference proteome</keyword>
<accession>O25290</accession>
<organism>
    <name type="scientific">Helicobacter pylori (strain ATCC 700392 / 26695)</name>
    <name type="common">Campylobacter pylori</name>
    <dbReference type="NCBI Taxonomy" id="85962"/>
    <lineage>
        <taxon>Bacteria</taxon>
        <taxon>Pseudomonadati</taxon>
        <taxon>Campylobacterota</taxon>
        <taxon>Epsilonproteobacteria</taxon>
        <taxon>Campylobacterales</taxon>
        <taxon>Helicobacteraceae</taxon>
        <taxon>Helicobacter</taxon>
    </lineage>
</organism>
<feature type="chain" id="PRO_0000149843" description="Diaminopimelate epimerase">
    <location>
        <begin position="1"/>
        <end position="273"/>
    </location>
</feature>
<feature type="active site" description="Proton donor" evidence="1">
    <location>
        <position position="69"/>
    </location>
</feature>
<feature type="active site" description="Proton acceptor" evidence="1">
    <location>
        <position position="209"/>
    </location>
</feature>
<feature type="binding site" evidence="1">
    <location>
        <position position="11"/>
    </location>
    <ligand>
        <name>substrate</name>
    </ligand>
</feature>
<feature type="binding site" evidence="1">
    <location>
        <position position="60"/>
    </location>
    <ligand>
        <name>substrate</name>
    </ligand>
</feature>
<feature type="binding site" evidence="1">
    <location>
        <begin position="70"/>
        <end position="71"/>
    </location>
    <ligand>
        <name>substrate</name>
    </ligand>
</feature>
<feature type="binding site" evidence="1">
    <location>
        <position position="181"/>
    </location>
    <ligand>
        <name>substrate</name>
    </ligand>
</feature>
<feature type="binding site" evidence="1">
    <location>
        <begin position="199"/>
        <end position="200"/>
    </location>
    <ligand>
        <name>substrate</name>
    </ligand>
</feature>
<feature type="binding site" evidence="1">
    <location>
        <begin position="210"/>
        <end position="211"/>
    </location>
    <ligand>
        <name>substrate</name>
    </ligand>
</feature>
<feature type="site" description="Could be important to modulate the pK values of the two catalytic cysteine residues" evidence="1">
    <location>
        <position position="152"/>
    </location>
</feature>
<feature type="site" description="Could be important to modulate the pK values of the two catalytic cysteine residues" evidence="1">
    <location>
        <position position="199"/>
    </location>
</feature>
<evidence type="ECO:0000255" key="1">
    <source>
        <dbReference type="HAMAP-Rule" id="MF_00197"/>
    </source>
</evidence>
<proteinExistence type="inferred from homology"/>
<dbReference type="EC" id="5.1.1.7" evidence="1"/>
<dbReference type="EMBL" id="AE000511">
    <property type="protein sequence ID" value="AAD07622.1"/>
    <property type="molecule type" value="Genomic_DNA"/>
</dbReference>
<dbReference type="PIR" id="F64590">
    <property type="entry name" value="F64590"/>
</dbReference>
<dbReference type="RefSeq" id="NP_207361.1">
    <property type="nucleotide sequence ID" value="NC_000915.1"/>
</dbReference>
<dbReference type="RefSeq" id="WP_000232462.1">
    <property type="nucleotide sequence ID" value="NC_018939.1"/>
</dbReference>
<dbReference type="SMR" id="O25290"/>
<dbReference type="FunCoup" id="O25290">
    <property type="interactions" value="415"/>
</dbReference>
<dbReference type="IntAct" id="O25290">
    <property type="interactions" value="2"/>
</dbReference>
<dbReference type="STRING" id="85962.HP_0566"/>
<dbReference type="PaxDb" id="85962-C694_02920"/>
<dbReference type="EnsemblBacteria" id="AAD07622">
    <property type="protein sequence ID" value="AAD07622"/>
    <property type="gene ID" value="HP_0566"/>
</dbReference>
<dbReference type="KEGG" id="heo:C694_02920"/>
<dbReference type="KEGG" id="hpy:HP_0566"/>
<dbReference type="PATRIC" id="fig|85962.47.peg.611"/>
<dbReference type="eggNOG" id="COG0253">
    <property type="taxonomic scope" value="Bacteria"/>
</dbReference>
<dbReference type="InParanoid" id="O25290"/>
<dbReference type="OrthoDB" id="9805408at2"/>
<dbReference type="PhylomeDB" id="O25290"/>
<dbReference type="UniPathway" id="UPA00034">
    <property type="reaction ID" value="UER00025"/>
</dbReference>
<dbReference type="Proteomes" id="UP000000429">
    <property type="component" value="Chromosome"/>
</dbReference>
<dbReference type="GO" id="GO:0005829">
    <property type="term" value="C:cytosol"/>
    <property type="evidence" value="ECO:0000318"/>
    <property type="project" value="GO_Central"/>
</dbReference>
<dbReference type="GO" id="GO:0008837">
    <property type="term" value="F:diaminopimelate epimerase activity"/>
    <property type="evidence" value="ECO:0000318"/>
    <property type="project" value="GO_Central"/>
</dbReference>
<dbReference type="GO" id="GO:0009089">
    <property type="term" value="P:lysine biosynthetic process via diaminopimelate"/>
    <property type="evidence" value="ECO:0000318"/>
    <property type="project" value="GO_Central"/>
</dbReference>
<dbReference type="FunFam" id="3.10.310.10:FF:000025">
    <property type="entry name" value="Diaminopimelate epimerase"/>
    <property type="match status" value="1"/>
</dbReference>
<dbReference type="FunFam" id="3.10.310.10:FF:000033">
    <property type="entry name" value="Diaminopimelate epimerase"/>
    <property type="match status" value="1"/>
</dbReference>
<dbReference type="Gene3D" id="3.10.310.10">
    <property type="entry name" value="Diaminopimelate Epimerase, Chain A, domain 1"/>
    <property type="match status" value="2"/>
</dbReference>
<dbReference type="HAMAP" id="MF_00197">
    <property type="entry name" value="DAP_epimerase"/>
    <property type="match status" value="1"/>
</dbReference>
<dbReference type="InterPro" id="IPR018510">
    <property type="entry name" value="DAP_epimerase_AS"/>
</dbReference>
<dbReference type="InterPro" id="IPR001653">
    <property type="entry name" value="DAP_epimerase_DapF"/>
</dbReference>
<dbReference type="NCBIfam" id="TIGR00652">
    <property type="entry name" value="DapF"/>
    <property type="match status" value="1"/>
</dbReference>
<dbReference type="PANTHER" id="PTHR31689:SF0">
    <property type="entry name" value="DIAMINOPIMELATE EPIMERASE"/>
    <property type="match status" value="1"/>
</dbReference>
<dbReference type="PANTHER" id="PTHR31689">
    <property type="entry name" value="DIAMINOPIMELATE EPIMERASE, CHLOROPLASTIC"/>
    <property type="match status" value="1"/>
</dbReference>
<dbReference type="Pfam" id="PF01678">
    <property type="entry name" value="DAP_epimerase"/>
    <property type="match status" value="2"/>
</dbReference>
<dbReference type="SUPFAM" id="SSF54506">
    <property type="entry name" value="Diaminopimelate epimerase-like"/>
    <property type="match status" value="2"/>
</dbReference>
<dbReference type="PROSITE" id="PS01326">
    <property type="entry name" value="DAP_EPIMERASE"/>
    <property type="match status" value="1"/>
</dbReference>
<sequence length="273" mass="30500">MVFYKYSGSGNDFLIVQSFKKKDFSNLAKQVCHRHEGFGADGLVVVLPSKDYDYEWDFYNSDGSKAGMCGNASRCVGLFAYQHAIASKNHVFLAGKREISICIEEPNIIESNLGNYKILDVIPALRCEKFFSSGSVLEHIPTFYLIDTGVPHLVGFVENKEGLNSLNTLELRALRHEFNANINIAFIENKETIFLQTYERGVEDFTLACGTGMAAVFIAARIFYNTPKKAALIPKSNESLELSLKNDGIFYKGAVRYIGMSVLGMRVFENGCF</sequence>
<gene>
    <name evidence="1" type="primary">dapF</name>
    <name type="ordered locus">HP_0566</name>
</gene>